<gene>
    <name evidence="1" type="primary">grpE</name>
    <name type="ordered locus">P9515_00151</name>
</gene>
<sequence>MIEEQSDNVENKDENVSMDNNISENLPIAEEQTNEDKKLPDDNNEKIDAEDLKNTITNNDARLEQLEKEHETLKSQYVRIAADFDNFRKRQSRDQDDLKIQLVSKALTAILPIVDNFERARQQLKPEGDEAQTLHRSYQGLYKQLVEVLKQQGVAPMRVVGQQFDPNLHEAVLREPSEEQNEDIIIEELQRGYHLEGKVLRHALVKVSMGPGQQISQESEEKDKVDKDIDSEGSISEEN</sequence>
<evidence type="ECO:0000255" key="1">
    <source>
        <dbReference type="HAMAP-Rule" id="MF_01151"/>
    </source>
</evidence>
<evidence type="ECO:0000256" key="2">
    <source>
        <dbReference type="SAM" id="MobiDB-lite"/>
    </source>
</evidence>
<organism>
    <name type="scientific">Prochlorococcus marinus (strain MIT 9515)</name>
    <dbReference type="NCBI Taxonomy" id="167542"/>
    <lineage>
        <taxon>Bacteria</taxon>
        <taxon>Bacillati</taxon>
        <taxon>Cyanobacteriota</taxon>
        <taxon>Cyanophyceae</taxon>
        <taxon>Synechococcales</taxon>
        <taxon>Prochlorococcaceae</taxon>
        <taxon>Prochlorococcus</taxon>
    </lineage>
</organism>
<comment type="function">
    <text evidence="1">Participates actively in the response to hyperosmotic and heat shock by preventing the aggregation of stress-denatured proteins, in association with DnaK and GrpE. It is the nucleotide exchange factor for DnaK and may function as a thermosensor. Unfolded proteins bind initially to DnaJ; upon interaction with the DnaJ-bound protein, DnaK hydrolyzes its bound ATP, resulting in the formation of a stable complex. GrpE releases ADP from DnaK; ATP binding to DnaK triggers the release of the substrate protein, thus completing the reaction cycle. Several rounds of ATP-dependent interactions between DnaJ, DnaK and GrpE are required for fully efficient folding.</text>
</comment>
<comment type="subunit">
    <text evidence="1">Homodimer.</text>
</comment>
<comment type="subcellular location">
    <subcellularLocation>
        <location evidence="1">Cytoplasm</location>
    </subcellularLocation>
</comment>
<comment type="similarity">
    <text evidence="1">Belongs to the GrpE family.</text>
</comment>
<reference key="1">
    <citation type="journal article" date="2007" name="PLoS Genet.">
        <title>Patterns and implications of gene gain and loss in the evolution of Prochlorococcus.</title>
        <authorList>
            <person name="Kettler G.C."/>
            <person name="Martiny A.C."/>
            <person name="Huang K."/>
            <person name="Zucker J."/>
            <person name="Coleman M.L."/>
            <person name="Rodrigue S."/>
            <person name="Chen F."/>
            <person name="Lapidus A."/>
            <person name="Ferriera S."/>
            <person name="Johnson J."/>
            <person name="Steglich C."/>
            <person name="Church G.M."/>
            <person name="Richardson P."/>
            <person name="Chisholm S.W."/>
        </authorList>
    </citation>
    <scope>NUCLEOTIDE SEQUENCE [LARGE SCALE GENOMIC DNA]</scope>
    <source>
        <strain>MIT 9515</strain>
    </source>
</reference>
<proteinExistence type="inferred from homology"/>
<dbReference type="EMBL" id="CP000552">
    <property type="protein sequence ID" value="ABM71224.1"/>
    <property type="molecule type" value="Genomic_DNA"/>
</dbReference>
<dbReference type="RefSeq" id="WP_011819341.1">
    <property type="nucleotide sequence ID" value="NC_008817.1"/>
</dbReference>
<dbReference type="SMR" id="A2BTV4"/>
<dbReference type="STRING" id="167542.P9515_00151"/>
<dbReference type="GeneID" id="60200566"/>
<dbReference type="KEGG" id="pmc:P9515_00151"/>
<dbReference type="eggNOG" id="COG0576">
    <property type="taxonomic scope" value="Bacteria"/>
</dbReference>
<dbReference type="HOGENOM" id="CLU_057217_5_1_3"/>
<dbReference type="OrthoDB" id="9812586at2"/>
<dbReference type="Proteomes" id="UP000001589">
    <property type="component" value="Chromosome"/>
</dbReference>
<dbReference type="GO" id="GO:0005737">
    <property type="term" value="C:cytoplasm"/>
    <property type="evidence" value="ECO:0007669"/>
    <property type="project" value="UniProtKB-SubCell"/>
</dbReference>
<dbReference type="GO" id="GO:0000774">
    <property type="term" value="F:adenyl-nucleotide exchange factor activity"/>
    <property type="evidence" value="ECO:0007669"/>
    <property type="project" value="InterPro"/>
</dbReference>
<dbReference type="GO" id="GO:0042803">
    <property type="term" value="F:protein homodimerization activity"/>
    <property type="evidence" value="ECO:0007669"/>
    <property type="project" value="InterPro"/>
</dbReference>
<dbReference type="GO" id="GO:0051087">
    <property type="term" value="F:protein-folding chaperone binding"/>
    <property type="evidence" value="ECO:0007669"/>
    <property type="project" value="InterPro"/>
</dbReference>
<dbReference type="GO" id="GO:0051082">
    <property type="term" value="F:unfolded protein binding"/>
    <property type="evidence" value="ECO:0007669"/>
    <property type="project" value="TreeGrafter"/>
</dbReference>
<dbReference type="GO" id="GO:0006457">
    <property type="term" value="P:protein folding"/>
    <property type="evidence" value="ECO:0007669"/>
    <property type="project" value="InterPro"/>
</dbReference>
<dbReference type="CDD" id="cd00446">
    <property type="entry name" value="GrpE"/>
    <property type="match status" value="1"/>
</dbReference>
<dbReference type="FunFam" id="2.30.22.10:FF:000001">
    <property type="entry name" value="Protein GrpE"/>
    <property type="match status" value="1"/>
</dbReference>
<dbReference type="Gene3D" id="3.90.20.20">
    <property type="match status" value="1"/>
</dbReference>
<dbReference type="Gene3D" id="2.30.22.10">
    <property type="entry name" value="Head domain of nucleotide exchange factor GrpE"/>
    <property type="match status" value="1"/>
</dbReference>
<dbReference type="HAMAP" id="MF_01151">
    <property type="entry name" value="GrpE"/>
    <property type="match status" value="1"/>
</dbReference>
<dbReference type="InterPro" id="IPR000740">
    <property type="entry name" value="GrpE"/>
</dbReference>
<dbReference type="InterPro" id="IPR013805">
    <property type="entry name" value="GrpE_coiled_coil"/>
</dbReference>
<dbReference type="InterPro" id="IPR009012">
    <property type="entry name" value="GrpE_head"/>
</dbReference>
<dbReference type="NCBIfam" id="NF010741">
    <property type="entry name" value="PRK14143.1"/>
    <property type="match status" value="1"/>
</dbReference>
<dbReference type="PANTHER" id="PTHR21237">
    <property type="entry name" value="GRPE PROTEIN"/>
    <property type="match status" value="1"/>
</dbReference>
<dbReference type="PANTHER" id="PTHR21237:SF23">
    <property type="entry name" value="GRPE PROTEIN HOMOLOG, MITOCHONDRIAL"/>
    <property type="match status" value="1"/>
</dbReference>
<dbReference type="Pfam" id="PF01025">
    <property type="entry name" value="GrpE"/>
    <property type="match status" value="1"/>
</dbReference>
<dbReference type="PRINTS" id="PR00773">
    <property type="entry name" value="GRPEPROTEIN"/>
</dbReference>
<dbReference type="SUPFAM" id="SSF58014">
    <property type="entry name" value="Coiled-coil domain of nucleotide exchange factor GrpE"/>
    <property type="match status" value="1"/>
</dbReference>
<dbReference type="SUPFAM" id="SSF51064">
    <property type="entry name" value="Head domain of nucleotide exchange factor GrpE"/>
    <property type="match status" value="1"/>
</dbReference>
<dbReference type="PROSITE" id="PS01071">
    <property type="entry name" value="GRPE"/>
    <property type="match status" value="1"/>
</dbReference>
<name>GRPE_PROM5</name>
<protein>
    <recommendedName>
        <fullName evidence="1">Protein GrpE</fullName>
    </recommendedName>
    <alternativeName>
        <fullName evidence="1">HSP-70 cofactor</fullName>
    </alternativeName>
</protein>
<feature type="chain" id="PRO_1000053615" description="Protein GrpE">
    <location>
        <begin position="1"/>
        <end position="239"/>
    </location>
</feature>
<feature type="region of interest" description="Disordered" evidence="2">
    <location>
        <begin position="1"/>
        <end position="53"/>
    </location>
</feature>
<feature type="region of interest" description="Disordered" evidence="2">
    <location>
        <begin position="210"/>
        <end position="239"/>
    </location>
</feature>
<feature type="compositionally biased region" description="Basic and acidic residues" evidence="2">
    <location>
        <begin position="34"/>
        <end position="53"/>
    </location>
</feature>
<feature type="compositionally biased region" description="Basic and acidic residues" evidence="2">
    <location>
        <begin position="219"/>
        <end position="230"/>
    </location>
</feature>
<keyword id="KW-0143">Chaperone</keyword>
<keyword id="KW-0963">Cytoplasm</keyword>
<keyword id="KW-0346">Stress response</keyword>
<accession>A2BTV4</accession>